<protein>
    <recommendedName>
        <fullName>Putative peroxiredoxin</fullName>
        <ecNumber evidence="2">1.11.1.24</ecNumber>
    </recommendedName>
    <alternativeName>
        <fullName>MF1</fullName>
    </alternativeName>
    <alternativeName>
        <fullName>Thioredoxin reductase</fullName>
    </alternativeName>
    <alternativeName>
        <fullName evidence="5">Thioredoxin-dependent peroxiredoxin</fullName>
    </alternativeName>
    <allergenName>Mal f 2</allergenName>
</protein>
<proteinExistence type="evidence at protein level"/>
<accession>P56577</accession>
<keyword id="KW-0020">Allergen</keyword>
<keyword id="KW-0049">Antioxidant</keyword>
<keyword id="KW-1015">Disulfide bond</keyword>
<keyword id="KW-0560">Oxidoreductase</keyword>
<keyword id="KW-0575">Peroxidase</keyword>
<keyword id="KW-0676">Redox-active center</keyword>
<organism>
    <name type="scientific">Malassezia furfur</name>
    <name type="common">Pityriasis versicolor infection agent</name>
    <name type="synonym">Pityrosporum furfur</name>
    <dbReference type="NCBI Taxonomy" id="55194"/>
    <lineage>
        <taxon>Eukaryota</taxon>
        <taxon>Fungi</taxon>
        <taxon>Dikarya</taxon>
        <taxon>Basidiomycota</taxon>
        <taxon>Ustilaginomycotina</taxon>
        <taxon>Malasseziomycetes</taxon>
        <taxon>Malasseziales</taxon>
        <taxon>Malasseziaceae</taxon>
        <taxon>Malassezia</taxon>
    </lineage>
</organism>
<dbReference type="EC" id="1.11.1.24" evidence="2"/>
<dbReference type="EMBL" id="AB011804">
    <property type="protein sequence ID" value="BAA32435.1"/>
    <property type="molecule type" value="Genomic_DNA"/>
</dbReference>
<dbReference type="PIR" id="JE0226">
    <property type="entry name" value="JE0226"/>
</dbReference>
<dbReference type="SMR" id="P56577"/>
<dbReference type="Allergome" id="3361">
    <property type="allergen name" value="Mala f 2.0101"/>
</dbReference>
<dbReference type="Allergome" id="468">
    <property type="allergen name" value="Mala f 2"/>
</dbReference>
<dbReference type="GO" id="GO:0005739">
    <property type="term" value="C:mitochondrion"/>
    <property type="evidence" value="ECO:0007669"/>
    <property type="project" value="TreeGrafter"/>
</dbReference>
<dbReference type="GO" id="GO:0005777">
    <property type="term" value="C:peroxisome"/>
    <property type="evidence" value="ECO:0007669"/>
    <property type="project" value="TreeGrafter"/>
</dbReference>
<dbReference type="GO" id="GO:0008379">
    <property type="term" value="F:thioredoxin peroxidase activity"/>
    <property type="evidence" value="ECO:0007669"/>
    <property type="project" value="InterPro"/>
</dbReference>
<dbReference type="GO" id="GO:0045454">
    <property type="term" value="P:cell redox homeostasis"/>
    <property type="evidence" value="ECO:0007669"/>
    <property type="project" value="TreeGrafter"/>
</dbReference>
<dbReference type="GO" id="GO:0034599">
    <property type="term" value="P:cellular response to oxidative stress"/>
    <property type="evidence" value="ECO:0007669"/>
    <property type="project" value="InterPro"/>
</dbReference>
<dbReference type="GO" id="GO:0042744">
    <property type="term" value="P:hydrogen peroxide catabolic process"/>
    <property type="evidence" value="ECO:0007669"/>
    <property type="project" value="TreeGrafter"/>
</dbReference>
<dbReference type="CDD" id="cd03013">
    <property type="entry name" value="PRX5_like"/>
    <property type="match status" value="1"/>
</dbReference>
<dbReference type="FunFam" id="3.40.30.10:FF:000020">
    <property type="entry name" value="Peroxiredoxin"/>
    <property type="match status" value="1"/>
</dbReference>
<dbReference type="Gene3D" id="3.40.30.10">
    <property type="entry name" value="Glutaredoxin"/>
    <property type="match status" value="1"/>
</dbReference>
<dbReference type="InterPro" id="IPR037944">
    <property type="entry name" value="PRX5-like"/>
</dbReference>
<dbReference type="InterPro" id="IPR013740">
    <property type="entry name" value="Redoxin"/>
</dbReference>
<dbReference type="InterPro" id="IPR036249">
    <property type="entry name" value="Thioredoxin-like_sf"/>
</dbReference>
<dbReference type="InterPro" id="IPR013766">
    <property type="entry name" value="Thioredoxin_domain"/>
</dbReference>
<dbReference type="PANTHER" id="PTHR10430">
    <property type="entry name" value="PEROXIREDOXIN"/>
    <property type="match status" value="1"/>
</dbReference>
<dbReference type="PANTHER" id="PTHR10430:SF16">
    <property type="entry name" value="PEROXIREDOXIN-5, MITOCHONDRIAL"/>
    <property type="match status" value="1"/>
</dbReference>
<dbReference type="Pfam" id="PF08534">
    <property type="entry name" value="Redoxin"/>
    <property type="match status" value="1"/>
</dbReference>
<dbReference type="SUPFAM" id="SSF52833">
    <property type="entry name" value="Thioredoxin-like"/>
    <property type="match status" value="1"/>
</dbReference>
<dbReference type="PROSITE" id="PS51352">
    <property type="entry name" value="THIOREDOXIN_2"/>
    <property type="match status" value="1"/>
</dbReference>
<sequence length="177" mass="19193">MPGDPTATAKGNEIPDTLMGYIPWTPELDSGEVCGIPTTFKTRDEWKGKKVVIVSIPGAYTPICHQQHIPPLVKRVDELKAKGVDAVYVIASNDPFVMAAWGNFNNAKDKVVFATDIDLAFSKALGATIDLSAKHFGERTARYALIIDDNKIVDFASDEGDTGKLQNASIDTILTKV</sequence>
<comment type="function">
    <text evidence="2">Thiol-specific peroxidase that catalyzes the reduction of hydrogen peroxide and organic hydroperoxides to water and alcohols, respectively. Plays a role in cell protection against oxidative stress by detoxifying peroxides and as sensor of hydrogen peroxide-mediated signaling events.</text>
</comment>
<comment type="catalytic activity">
    <reaction evidence="2">
        <text>a hydroperoxide + [thioredoxin]-dithiol = an alcohol + [thioredoxin]-disulfide + H2O</text>
        <dbReference type="Rhea" id="RHEA:62620"/>
        <dbReference type="Rhea" id="RHEA-COMP:10698"/>
        <dbReference type="Rhea" id="RHEA-COMP:10700"/>
        <dbReference type="ChEBI" id="CHEBI:15377"/>
        <dbReference type="ChEBI" id="CHEBI:29950"/>
        <dbReference type="ChEBI" id="CHEBI:30879"/>
        <dbReference type="ChEBI" id="CHEBI:35924"/>
        <dbReference type="ChEBI" id="CHEBI:50058"/>
        <dbReference type="EC" id="1.11.1.24"/>
    </reaction>
</comment>
<comment type="subunit">
    <text evidence="2">Homodimer; disulfide-linked, upon oxidation.</text>
</comment>
<comment type="allergen">
    <text evidence="4">Causes an allergic reaction in human.</text>
</comment>
<comment type="miscellaneous">
    <text evidence="2">The active site is a conserved redox-active cysteine residue, the peroxidatic cysteine (C(P)), which makes the nucleophilic attack on the peroxide substrate. The peroxide oxidizes the C(P)-SH to cysteine sulfenic acid (C(P)-SOH), which then reacts with another cysteine residue, the resolving cysteine (C(R)), to form a disulfide bridge. The disulfide is subsequently reduced by an appropriate electron donor to complete the catalytic cycle. In this typical 2-Cys Prx, C(R) is provided by the other dimeric subunit to form an intersubunit disulfide. The disulfide is subsequently reduced by thioredoxin.</text>
</comment>
<comment type="similarity">
    <text evidence="5">Belongs to the peroxiredoxin family. Prx5 subfamily.</text>
</comment>
<name>MALF2_MALFU</name>
<feature type="chain" id="PRO_0000056606" description="Putative peroxiredoxin">
    <location>
        <begin position="1"/>
        <end position="177"/>
    </location>
</feature>
<feature type="domain" description="Thioredoxin" evidence="3">
    <location>
        <begin position="8"/>
        <end position="177"/>
    </location>
</feature>
<feature type="short sequence motif" description="Microbody targeting signal" evidence="1">
    <location>
        <begin position="175"/>
        <end position="177"/>
    </location>
</feature>
<feature type="active site" description="Cysteine sulfenic acid (-SOH) intermediate" evidence="2">
    <location>
        <position position="64"/>
    </location>
</feature>
<feature type="disulfide bond" description="Interchain (with C-64); in linked form" evidence="2">
    <location>
        <position position="34"/>
    </location>
</feature>
<feature type="disulfide bond" description="Interchain (with C-34); in linked form" evidence="2">
    <location>
        <position position="64"/>
    </location>
</feature>
<reference key="1">
    <citation type="journal article" date="1998" name="Biochem. Biophys. Res. Commun.">
        <title>Identification and cloning of two novel allergens from the lipophilic yeast, Malassezia furfur.</title>
        <authorList>
            <person name="Yasueda H."/>
            <person name="Hashida-Okado T."/>
            <person name="Saito A."/>
            <person name="Uchida K."/>
            <person name="Kuroda M."/>
            <person name="Onishi Y."/>
            <person name="Takahashi K."/>
            <person name="Yamaguchi H."/>
            <person name="Takesako K."/>
            <person name="Akiyama K."/>
        </authorList>
    </citation>
    <scope>NUCLEOTIDE SEQUENCE [GENOMIC DNA]</scope>
    <source>
        <strain>TIMM 2782</strain>
    </source>
</reference>
<evidence type="ECO:0000250" key="1"/>
<evidence type="ECO:0000250" key="2">
    <source>
        <dbReference type="UniProtKB" id="P38013"/>
    </source>
</evidence>
<evidence type="ECO:0000255" key="3">
    <source>
        <dbReference type="PROSITE-ProRule" id="PRU00691"/>
    </source>
</evidence>
<evidence type="ECO:0000269" key="4">
    <source>
    </source>
</evidence>
<evidence type="ECO:0000305" key="5"/>